<protein>
    <recommendedName>
        <fullName evidence="1">Trp operon repressor</fullName>
    </recommendedName>
</protein>
<proteinExistence type="inferred from homology"/>
<name>TRPR_SHIBS</name>
<comment type="function">
    <text evidence="1">This protein is an aporepressor. When complexed with L-tryptophan it binds the operator region of the trp operon (5'-ACTAGT-'3') and prevents the initiation of transcription. The complex also regulates trp repressor biosynthesis by binding to its regulatory region.</text>
</comment>
<comment type="subunit">
    <text evidence="1">Homodimer.</text>
</comment>
<comment type="subcellular location">
    <subcellularLocation>
        <location evidence="1">Cytoplasm</location>
    </subcellularLocation>
</comment>
<comment type="similarity">
    <text evidence="1">Belongs to the TrpR family.</text>
</comment>
<organism>
    <name type="scientific">Shigella boydii serotype 4 (strain Sb227)</name>
    <dbReference type="NCBI Taxonomy" id="300268"/>
    <lineage>
        <taxon>Bacteria</taxon>
        <taxon>Pseudomonadati</taxon>
        <taxon>Pseudomonadota</taxon>
        <taxon>Gammaproteobacteria</taxon>
        <taxon>Enterobacterales</taxon>
        <taxon>Enterobacteriaceae</taxon>
        <taxon>Shigella</taxon>
    </lineage>
</organism>
<feature type="chain" id="PRO_1000014048" description="Trp operon repressor">
    <location>
        <begin position="1"/>
        <end position="108"/>
    </location>
</feature>
<feature type="DNA-binding region" evidence="1">
    <location>
        <begin position="68"/>
        <end position="91"/>
    </location>
</feature>
<evidence type="ECO:0000255" key="1">
    <source>
        <dbReference type="HAMAP-Rule" id="MF_00475"/>
    </source>
</evidence>
<sequence length="108" mass="12355">MAQQSPYSAAMAEQRHQEWLRFVDLLKNAYQNDLHLPLLNLMLTPDEREALGTRVRIVEELLRGEMSQRELKNELGAGIATITRGSNSLKAAPVELRQWLEEVLLKSD</sequence>
<keyword id="KW-0963">Cytoplasm</keyword>
<keyword id="KW-0238">DNA-binding</keyword>
<keyword id="KW-0678">Repressor</keyword>
<keyword id="KW-0804">Transcription</keyword>
<keyword id="KW-0805">Transcription regulation</keyword>
<dbReference type="EMBL" id="CP000036">
    <property type="protein sequence ID" value="ABB68863.1"/>
    <property type="molecule type" value="Genomic_DNA"/>
</dbReference>
<dbReference type="RefSeq" id="WP_000068679.1">
    <property type="nucleotide sequence ID" value="NC_007613.1"/>
</dbReference>
<dbReference type="SMR" id="Q31SU5"/>
<dbReference type="GeneID" id="93777452"/>
<dbReference type="KEGG" id="sbo:SBO_4456"/>
<dbReference type="HOGENOM" id="CLU_147939_0_0_6"/>
<dbReference type="Proteomes" id="UP000007067">
    <property type="component" value="Chromosome"/>
</dbReference>
<dbReference type="GO" id="GO:0005737">
    <property type="term" value="C:cytoplasm"/>
    <property type="evidence" value="ECO:0007669"/>
    <property type="project" value="UniProtKB-SubCell"/>
</dbReference>
<dbReference type="GO" id="GO:0003700">
    <property type="term" value="F:DNA-binding transcription factor activity"/>
    <property type="evidence" value="ECO:0007669"/>
    <property type="project" value="InterPro"/>
</dbReference>
<dbReference type="GO" id="GO:0043565">
    <property type="term" value="F:sequence-specific DNA binding"/>
    <property type="evidence" value="ECO:0007669"/>
    <property type="project" value="InterPro"/>
</dbReference>
<dbReference type="GO" id="GO:0045892">
    <property type="term" value="P:negative regulation of DNA-templated transcription"/>
    <property type="evidence" value="ECO:0007669"/>
    <property type="project" value="UniProtKB-UniRule"/>
</dbReference>
<dbReference type="FunFam" id="1.10.1270.10:FF:000001">
    <property type="entry name" value="Trp operon repressor"/>
    <property type="match status" value="1"/>
</dbReference>
<dbReference type="Gene3D" id="1.10.1270.10">
    <property type="entry name" value="TrpR-like"/>
    <property type="match status" value="1"/>
</dbReference>
<dbReference type="HAMAP" id="MF_00475">
    <property type="entry name" value="Trp_repressor"/>
    <property type="match status" value="1"/>
</dbReference>
<dbReference type="InterPro" id="IPR000831">
    <property type="entry name" value="Trp_repress"/>
</dbReference>
<dbReference type="InterPro" id="IPR013335">
    <property type="entry name" value="Trp_repress_bac"/>
</dbReference>
<dbReference type="InterPro" id="IPR010921">
    <property type="entry name" value="Trp_repressor/repl_initiator"/>
</dbReference>
<dbReference type="InterPro" id="IPR038116">
    <property type="entry name" value="TrpR-like_sf"/>
</dbReference>
<dbReference type="NCBIfam" id="TIGR01321">
    <property type="entry name" value="TrpR"/>
    <property type="match status" value="1"/>
</dbReference>
<dbReference type="PANTHER" id="PTHR38025">
    <property type="entry name" value="TRP OPERON REPRESSOR"/>
    <property type="match status" value="1"/>
</dbReference>
<dbReference type="PANTHER" id="PTHR38025:SF1">
    <property type="entry name" value="TRP OPERON REPRESSOR"/>
    <property type="match status" value="1"/>
</dbReference>
<dbReference type="Pfam" id="PF01371">
    <property type="entry name" value="Trp_repressor"/>
    <property type="match status" value="1"/>
</dbReference>
<dbReference type="PIRSF" id="PIRSF003196">
    <property type="entry name" value="Trp_repressor"/>
    <property type="match status" value="1"/>
</dbReference>
<dbReference type="SUPFAM" id="SSF48295">
    <property type="entry name" value="TrpR-like"/>
    <property type="match status" value="1"/>
</dbReference>
<accession>Q31SU5</accession>
<gene>
    <name evidence="1" type="primary">trpR</name>
    <name type="ordered locus">SBO_4456</name>
</gene>
<reference key="1">
    <citation type="journal article" date="2005" name="Nucleic Acids Res.">
        <title>Genome dynamics and diversity of Shigella species, the etiologic agents of bacillary dysentery.</title>
        <authorList>
            <person name="Yang F."/>
            <person name="Yang J."/>
            <person name="Zhang X."/>
            <person name="Chen L."/>
            <person name="Jiang Y."/>
            <person name="Yan Y."/>
            <person name="Tang X."/>
            <person name="Wang J."/>
            <person name="Xiong Z."/>
            <person name="Dong J."/>
            <person name="Xue Y."/>
            <person name="Zhu Y."/>
            <person name="Xu X."/>
            <person name="Sun L."/>
            <person name="Chen S."/>
            <person name="Nie H."/>
            <person name="Peng J."/>
            <person name="Xu J."/>
            <person name="Wang Y."/>
            <person name="Yuan Z."/>
            <person name="Wen Y."/>
            <person name="Yao Z."/>
            <person name="Shen Y."/>
            <person name="Qiang B."/>
            <person name="Hou Y."/>
            <person name="Yu J."/>
            <person name="Jin Q."/>
        </authorList>
    </citation>
    <scope>NUCLEOTIDE SEQUENCE [LARGE SCALE GENOMIC DNA]</scope>
    <source>
        <strain>Sb227</strain>
    </source>
</reference>